<dbReference type="EMBL" id="CP000712">
    <property type="protein sequence ID" value="ABQ76674.1"/>
    <property type="molecule type" value="Genomic_DNA"/>
</dbReference>
<dbReference type="SMR" id="A5VXR4"/>
<dbReference type="KEGG" id="ppf:Pput_0504"/>
<dbReference type="eggNOG" id="COG0098">
    <property type="taxonomic scope" value="Bacteria"/>
</dbReference>
<dbReference type="HOGENOM" id="CLU_065898_2_2_6"/>
<dbReference type="GO" id="GO:0015935">
    <property type="term" value="C:small ribosomal subunit"/>
    <property type="evidence" value="ECO:0007669"/>
    <property type="project" value="InterPro"/>
</dbReference>
<dbReference type="GO" id="GO:0019843">
    <property type="term" value="F:rRNA binding"/>
    <property type="evidence" value="ECO:0007669"/>
    <property type="project" value="UniProtKB-UniRule"/>
</dbReference>
<dbReference type="GO" id="GO:0003735">
    <property type="term" value="F:structural constituent of ribosome"/>
    <property type="evidence" value="ECO:0007669"/>
    <property type="project" value="InterPro"/>
</dbReference>
<dbReference type="GO" id="GO:0006412">
    <property type="term" value="P:translation"/>
    <property type="evidence" value="ECO:0007669"/>
    <property type="project" value="UniProtKB-UniRule"/>
</dbReference>
<dbReference type="FunFam" id="3.30.160.20:FF:000001">
    <property type="entry name" value="30S ribosomal protein S5"/>
    <property type="match status" value="1"/>
</dbReference>
<dbReference type="FunFam" id="3.30.230.10:FF:000002">
    <property type="entry name" value="30S ribosomal protein S5"/>
    <property type="match status" value="1"/>
</dbReference>
<dbReference type="Gene3D" id="3.30.160.20">
    <property type="match status" value="1"/>
</dbReference>
<dbReference type="Gene3D" id="3.30.230.10">
    <property type="match status" value="1"/>
</dbReference>
<dbReference type="HAMAP" id="MF_01307_B">
    <property type="entry name" value="Ribosomal_uS5_B"/>
    <property type="match status" value="1"/>
</dbReference>
<dbReference type="InterPro" id="IPR020568">
    <property type="entry name" value="Ribosomal_Su5_D2-typ_SF"/>
</dbReference>
<dbReference type="InterPro" id="IPR000851">
    <property type="entry name" value="Ribosomal_uS5"/>
</dbReference>
<dbReference type="InterPro" id="IPR005712">
    <property type="entry name" value="Ribosomal_uS5_bac-type"/>
</dbReference>
<dbReference type="InterPro" id="IPR005324">
    <property type="entry name" value="Ribosomal_uS5_C"/>
</dbReference>
<dbReference type="InterPro" id="IPR013810">
    <property type="entry name" value="Ribosomal_uS5_N"/>
</dbReference>
<dbReference type="InterPro" id="IPR018192">
    <property type="entry name" value="Ribosomal_uS5_N_CS"/>
</dbReference>
<dbReference type="InterPro" id="IPR014721">
    <property type="entry name" value="Ribsml_uS5_D2-typ_fold_subgr"/>
</dbReference>
<dbReference type="NCBIfam" id="TIGR01021">
    <property type="entry name" value="rpsE_bact"/>
    <property type="match status" value="1"/>
</dbReference>
<dbReference type="PANTHER" id="PTHR48432">
    <property type="entry name" value="S5 DRBM DOMAIN-CONTAINING PROTEIN"/>
    <property type="match status" value="1"/>
</dbReference>
<dbReference type="PANTHER" id="PTHR48432:SF1">
    <property type="entry name" value="S5 DRBM DOMAIN-CONTAINING PROTEIN"/>
    <property type="match status" value="1"/>
</dbReference>
<dbReference type="Pfam" id="PF00333">
    <property type="entry name" value="Ribosomal_S5"/>
    <property type="match status" value="1"/>
</dbReference>
<dbReference type="Pfam" id="PF03719">
    <property type="entry name" value="Ribosomal_S5_C"/>
    <property type="match status" value="1"/>
</dbReference>
<dbReference type="SUPFAM" id="SSF54768">
    <property type="entry name" value="dsRNA-binding domain-like"/>
    <property type="match status" value="1"/>
</dbReference>
<dbReference type="SUPFAM" id="SSF54211">
    <property type="entry name" value="Ribosomal protein S5 domain 2-like"/>
    <property type="match status" value="1"/>
</dbReference>
<dbReference type="PROSITE" id="PS00585">
    <property type="entry name" value="RIBOSOMAL_S5"/>
    <property type="match status" value="1"/>
</dbReference>
<dbReference type="PROSITE" id="PS50881">
    <property type="entry name" value="S5_DSRBD"/>
    <property type="match status" value="1"/>
</dbReference>
<feature type="chain" id="PRO_0000323175" description="Small ribosomal subunit protein uS5">
    <location>
        <begin position="1"/>
        <end position="166"/>
    </location>
</feature>
<feature type="domain" description="S5 DRBM" evidence="1">
    <location>
        <begin position="12"/>
        <end position="75"/>
    </location>
</feature>
<protein>
    <recommendedName>
        <fullName evidence="1">Small ribosomal subunit protein uS5</fullName>
    </recommendedName>
    <alternativeName>
        <fullName evidence="2">30S ribosomal protein S5</fullName>
    </alternativeName>
</protein>
<comment type="function">
    <text evidence="1">With S4 and S12 plays an important role in translational accuracy.</text>
</comment>
<comment type="function">
    <text evidence="1">Located at the back of the 30S subunit body where it stabilizes the conformation of the head with respect to the body.</text>
</comment>
<comment type="subunit">
    <text evidence="1">Part of the 30S ribosomal subunit. Contacts proteins S4 and S8.</text>
</comment>
<comment type="domain">
    <text>The N-terminal domain interacts with the head of the 30S subunit; the C-terminal domain interacts with the body and contacts protein S4. The interaction surface between S4 and S5 is involved in control of translational fidelity.</text>
</comment>
<comment type="similarity">
    <text evidence="1">Belongs to the universal ribosomal protein uS5 family.</text>
</comment>
<organism>
    <name type="scientific">Pseudomonas putida (strain ATCC 700007 / DSM 6899 / JCM 31910 / BCRC 17059 / LMG 24140 / F1)</name>
    <dbReference type="NCBI Taxonomy" id="351746"/>
    <lineage>
        <taxon>Bacteria</taxon>
        <taxon>Pseudomonadati</taxon>
        <taxon>Pseudomonadota</taxon>
        <taxon>Gammaproteobacteria</taxon>
        <taxon>Pseudomonadales</taxon>
        <taxon>Pseudomonadaceae</taxon>
        <taxon>Pseudomonas</taxon>
    </lineage>
</organism>
<sequence length="166" mass="17666">MANNDQKRDEGYIEKLVQVNRVAKTVKGGRIFTFTALTVVGDGKGRVGFGRGKSREVPAAIQKAMEAARRNMIQVDLKGTTLQYATKAAHGASKVYMQPASEGTGIIAGGAMRAVLEVAGVQNVLAKCYGSTNPVNVVYATFKGLKAMQSPESIAAKRGKSVEEIF</sequence>
<accession>A5VXR4</accession>
<keyword id="KW-0687">Ribonucleoprotein</keyword>
<keyword id="KW-0689">Ribosomal protein</keyword>
<keyword id="KW-0694">RNA-binding</keyword>
<keyword id="KW-0699">rRNA-binding</keyword>
<evidence type="ECO:0000255" key="1">
    <source>
        <dbReference type="HAMAP-Rule" id="MF_01307"/>
    </source>
</evidence>
<evidence type="ECO:0000305" key="2"/>
<name>RS5_PSEP1</name>
<reference key="1">
    <citation type="submission" date="2007-05" db="EMBL/GenBank/DDBJ databases">
        <title>Complete sequence of Pseudomonas putida F1.</title>
        <authorList>
            <consortium name="US DOE Joint Genome Institute"/>
            <person name="Copeland A."/>
            <person name="Lucas S."/>
            <person name="Lapidus A."/>
            <person name="Barry K."/>
            <person name="Detter J.C."/>
            <person name="Glavina del Rio T."/>
            <person name="Hammon N."/>
            <person name="Israni S."/>
            <person name="Dalin E."/>
            <person name="Tice H."/>
            <person name="Pitluck S."/>
            <person name="Chain P."/>
            <person name="Malfatti S."/>
            <person name="Shin M."/>
            <person name="Vergez L."/>
            <person name="Schmutz J."/>
            <person name="Larimer F."/>
            <person name="Land M."/>
            <person name="Hauser L."/>
            <person name="Kyrpides N."/>
            <person name="Lykidis A."/>
            <person name="Parales R."/>
            <person name="Richardson P."/>
        </authorList>
    </citation>
    <scope>NUCLEOTIDE SEQUENCE [LARGE SCALE GENOMIC DNA]</scope>
    <source>
        <strain>ATCC 700007 / DSM 6899 / JCM 31910 / BCRC 17059 / LMG 24140 / F1</strain>
    </source>
</reference>
<proteinExistence type="inferred from homology"/>
<gene>
    <name evidence="1" type="primary">rpsE</name>
    <name type="ordered locus">Pput_0504</name>
</gene>